<dbReference type="EMBL" id="AK030016">
    <property type="protein sequence ID" value="BAC26736.1"/>
    <property type="molecule type" value="mRNA"/>
</dbReference>
<dbReference type="EMBL" id="AK029995">
    <property type="protein sequence ID" value="BAC26723.1"/>
    <property type="molecule type" value="mRNA"/>
</dbReference>
<dbReference type="EMBL" id="AK083591">
    <property type="protein sequence ID" value="BAC38963.1"/>
    <property type="molecule type" value="mRNA"/>
</dbReference>
<dbReference type="EMBL" id="AK122234">
    <property type="protein sequence ID" value="BAC65516.1"/>
    <property type="status" value="ALT_INIT"/>
    <property type="molecule type" value="mRNA"/>
</dbReference>
<dbReference type="EMBL" id="BC046627">
    <property type="protein sequence ID" value="AAH46627.1"/>
    <property type="molecule type" value="mRNA"/>
</dbReference>
<dbReference type="CCDS" id="CCDS36577.1">
    <molecule id="Q8C0Q9-1"/>
</dbReference>
<dbReference type="RefSeq" id="NP_787126.3">
    <molecule id="Q8C0Q9-1"/>
    <property type="nucleotide sequence ID" value="NM_175930.6"/>
</dbReference>
<dbReference type="SMR" id="Q8C0Q9"/>
<dbReference type="BioGRID" id="229981">
    <property type="interactions" value="22"/>
</dbReference>
<dbReference type="FunCoup" id="Q8C0Q9">
    <property type="interactions" value="992"/>
</dbReference>
<dbReference type="STRING" id="10090.ENSMUSP00000105313"/>
<dbReference type="GlyGen" id="Q8C0Q9">
    <property type="glycosylation" value="1 site"/>
</dbReference>
<dbReference type="iPTMnet" id="Q8C0Q9"/>
<dbReference type="PhosphoSitePlus" id="Q8C0Q9"/>
<dbReference type="PaxDb" id="10090-ENSMUSP00000105313"/>
<dbReference type="PeptideAtlas" id="Q8C0Q9"/>
<dbReference type="ProteomicsDB" id="300478">
    <molecule id="Q8C0Q9-1"/>
</dbReference>
<dbReference type="ProteomicsDB" id="300479">
    <molecule id="Q8C0Q9-2"/>
</dbReference>
<dbReference type="ProteomicsDB" id="300480">
    <molecule id="Q8C0Q9-3"/>
</dbReference>
<dbReference type="Antibodypedia" id="25491">
    <property type="antibodies" value="233 antibodies from 29 providers"/>
</dbReference>
<dbReference type="DNASU" id="217944"/>
<dbReference type="Ensembl" id="ENSMUST00000109691.4">
    <molecule id="Q8C0Q9-1"/>
    <property type="protein sequence ID" value="ENSMUSP00000105313.3"/>
    <property type="gene ID" value="ENSMUSG00000041992.10"/>
</dbReference>
<dbReference type="Ensembl" id="ENSMUST00000222105.2">
    <molecule id="Q8C0Q9-2"/>
    <property type="protein sequence ID" value="ENSMUSP00000152875.2"/>
    <property type="gene ID" value="ENSMUSG00000041992.10"/>
</dbReference>
<dbReference type="Ensembl" id="ENSMUST00000222185.2">
    <molecule id="Q8C0Q9-3"/>
    <property type="protein sequence ID" value="ENSMUSP00000152339.2"/>
    <property type="gene ID" value="ENSMUSG00000041992.10"/>
</dbReference>
<dbReference type="GeneID" id="217944"/>
<dbReference type="KEGG" id="mmu:217944"/>
<dbReference type="UCSC" id="uc007pib.2">
    <molecule id="Q8C0Q9-1"/>
    <property type="organism name" value="mouse"/>
</dbReference>
<dbReference type="AGR" id="MGI:2444365"/>
<dbReference type="CTD" id="9771"/>
<dbReference type="MGI" id="MGI:2444365">
    <property type="gene designation" value="Rapgef5"/>
</dbReference>
<dbReference type="VEuPathDB" id="HostDB:ENSMUSG00000041992"/>
<dbReference type="eggNOG" id="KOG2378">
    <property type="taxonomic scope" value="Eukaryota"/>
</dbReference>
<dbReference type="GeneTree" id="ENSGT00940000155137"/>
<dbReference type="HOGENOM" id="CLU_006829_1_0_1"/>
<dbReference type="InParanoid" id="Q8C0Q9"/>
<dbReference type="OMA" id="FDWTIFN"/>
<dbReference type="OrthoDB" id="21144at2759"/>
<dbReference type="PhylomeDB" id="Q8C0Q9"/>
<dbReference type="TreeFam" id="TF313184"/>
<dbReference type="BioGRID-ORCS" id="217944">
    <property type="hits" value="4 hits in 77 CRISPR screens"/>
</dbReference>
<dbReference type="ChiTaRS" id="Rapgef5">
    <property type="organism name" value="mouse"/>
</dbReference>
<dbReference type="PRO" id="PR:Q8C0Q9"/>
<dbReference type="Proteomes" id="UP000000589">
    <property type="component" value="Chromosome 12"/>
</dbReference>
<dbReference type="RNAct" id="Q8C0Q9">
    <property type="molecule type" value="protein"/>
</dbReference>
<dbReference type="Bgee" id="ENSMUSG00000041992">
    <property type="expression patterns" value="Expressed in superior cervical ganglion and 286 other cell types or tissues"/>
</dbReference>
<dbReference type="ExpressionAtlas" id="Q8C0Q9">
    <property type="expression patterns" value="baseline and differential"/>
</dbReference>
<dbReference type="GO" id="GO:0016604">
    <property type="term" value="C:nuclear body"/>
    <property type="evidence" value="ECO:0007669"/>
    <property type="project" value="Ensembl"/>
</dbReference>
<dbReference type="GO" id="GO:0005634">
    <property type="term" value="C:nucleus"/>
    <property type="evidence" value="ECO:0000250"/>
    <property type="project" value="UniProtKB"/>
</dbReference>
<dbReference type="GO" id="GO:0030742">
    <property type="term" value="F:GTP-dependent protein binding"/>
    <property type="evidence" value="ECO:0000250"/>
    <property type="project" value="UniProtKB"/>
</dbReference>
<dbReference type="GO" id="GO:0005085">
    <property type="term" value="F:guanyl-nucleotide exchange factor activity"/>
    <property type="evidence" value="ECO:0000250"/>
    <property type="project" value="UniProtKB"/>
</dbReference>
<dbReference type="GO" id="GO:0007264">
    <property type="term" value="P:small GTPase-mediated signal transduction"/>
    <property type="evidence" value="ECO:0007669"/>
    <property type="project" value="InterPro"/>
</dbReference>
<dbReference type="CDD" id="cd04437">
    <property type="entry name" value="DEP_Epac"/>
    <property type="match status" value="1"/>
</dbReference>
<dbReference type="CDD" id="cd00155">
    <property type="entry name" value="RasGEF"/>
    <property type="match status" value="1"/>
</dbReference>
<dbReference type="CDD" id="cd06224">
    <property type="entry name" value="REM"/>
    <property type="match status" value="1"/>
</dbReference>
<dbReference type="FunFam" id="1.10.840.10:FF:000002">
    <property type="entry name" value="Rap guanine nucleotide exchange factor 4"/>
    <property type="match status" value="1"/>
</dbReference>
<dbReference type="FunFam" id="1.10.10.10:FF:001265">
    <property type="entry name" value="Rap guanine nucleotide exchange factor 5"/>
    <property type="match status" value="1"/>
</dbReference>
<dbReference type="FunFam" id="1.20.870.10:FF:000013">
    <property type="entry name" value="rap guanine nucleotide exchange factor 5"/>
    <property type="match status" value="1"/>
</dbReference>
<dbReference type="Gene3D" id="3.10.20.90">
    <property type="entry name" value="Phosphatidylinositol 3-kinase Catalytic Subunit, Chain A, domain 1"/>
    <property type="match status" value="1"/>
</dbReference>
<dbReference type="Gene3D" id="1.10.840.10">
    <property type="entry name" value="Ras guanine-nucleotide exchange factors catalytic domain"/>
    <property type="match status" value="1"/>
</dbReference>
<dbReference type="Gene3D" id="1.20.870.10">
    <property type="entry name" value="Son of sevenless (SoS) protein Chain: S domain 1"/>
    <property type="match status" value="1"/>
</dbReference>
<dbReference type="Gene3D" id="1.10.10.10">
    <property type="entry name" value="Winged helix-like DNA-binding domain superfamily/Winged helix DNA-binding domain"/>
    <property type="match status" value="1"/>
</dbReference>
<dbReference type="InterPro" id="IPR000591">
    <property type="entry name" value="DEP_dom"/>
</dbReference>
<dbReference type="InterPro" id="IPR008937">
    <property type="entry name" value="Ras-like_GEF"/>
</dbReference>
<dbReference type="InterPro" id="IPR000651">
    <property type="entry name" value="Ras-like_Gua-exchang_fac_N"/>
</dbReference>
<dbReference type="InterPro" id="IPR019804">
    <property type="entry name" value="Ras_G-nucl-exch_fac_CS"/>
</dbReference>
<dbReference type="InterPro" id="IPR023578">
    <property type="entry name" value="Ras_GEF_dom_sf"/>
</dbReference>
<dbReference type="InterPro" id="IPR001895">
    <property type="entry name" value="RASGEF_cat_dom"/>
</dbReference>
<dbReference type="InterPro" id="IPR036964">
    <property type="entry name" value="RASGEF_cat_dom_sf"/>
</dbReference>
<dbReference type="InterPro" id="IPR029071">
    <property type="entry name" value="Ubiquitin-like_domsf"/>
</dbReference>
<dbReference type="InterPro" id="IPR036388">
    <property type="entry name" value="WH-like_DNA-bd_sf"/>
</dbReference>
<dbReference type="InterPro" id="IPR036390">
    <property type="entry name" value="WH_DNA-bd_sf"/>
</dbReference>
<dbReference type="PANTHER" id="PTHR23113">
    <property type="entry name" value="GUANINE NUCLEOTIDE EXCHANGE FACTOR"/>
    <property type="match status" value="1"/>
</dbReference>
<dbReference type="PANTHER" id="PTHR23113:SF26">
    <property type="entry name" value="RAP GUANINE NUCLEOTIDE EXCHANGE FACTOR 5"/>
    <property type="match status" value="1"/>
</dbReference>
<dbReference type="Pfam" id="PF00610">
    <property type="entry name" value="DEP"/>
    <property type="match status" value="1"/>
</dbReference>
<dbReference type="Pfam" id="PF00617">
    <property type="entry name" value="RasGEF"/>
    <property type="match status" value="1"/>
</dbReference>
<dbReference type="Pfam" id="PF00618">
    <property type="entry name" value="RasGEF_N"/>
    <property type="match status" value="1"/>
</dbReference>
<dbReference type="SMART" id="SM00049">
    <property type="entry name" value="DEP"/>
    <property type="match status" value="1"/>
</dbReference>
<dbReference type="SMART" id="SM00147">
    <property type="entry name" value="RasGEF"/>
    <property type="match status" value="1"/>
</dbReference>
<dbReference type="SMART" id="SM00229">
    <property type="entry name" value="RasGEFN"/>
    <property type="match status" value="1"/>
</dbReference>
<dbReference type="SUPFAM" id="SSF48366">
    <property type="entry name" value="Ras GEF"/>
    <property type="match status" value="1"/>
</dbReference>
<dbReference type="SUPFAM" id="SSF54236">
    <property type="entry name" value="Ubiquitin-like"/>
    <property type="match status" value="1"/>
</dbReference>
<dbReference type="SUPFAM" id="SSF46785">
    <property type="entry name" value="Winged helix' DNA-binding domain"/>
    <property type="match status" value="1"/>
</dbReference>
<dbReference type="PROSITE" id="PS50186">
    <property type="entry name" value="DEP"/>
    <property type="match status" value="1"/>
</dbReference>
<dbReference type="PROSITE" id="PS00720">
    <property type="entry name" value="RASGEF"/>
    <property type="match status" value="1"/>
</dbReference>
<dbReference type="PROSITE" id="PS50009">
    <property type="entry name" value="RASGEF_CAT"/>
    <property type="match status" value="1"/>
</dbReference>
<dbReference type="PROSITE" id="PS50212">
    <property type="entry name" value="RASGEF_NTER"/>
    <property type="match status" value="1"/>
</dbReference>
<reference key="1">
    <citation type="journal article" date="2003" name="DNA Res.">
        <title>Prediction of the coding sequences of mouse homologues of KIAA gene: II. The complete nucleotide sequences of 400 mouse KIAA-homologous cDNAs identified by screening of terminal sequences of cDNA clones randomly sampled from size-fractionated libraries.</title>
        <authorList>
            <person name="Okazaki N."/>
            <person name="Kikuno R."/>
            <person name="Ohara R."/>
            <person name="Inamoto S."/>
            <person name="Aizawa H."/>
            <person name="Yuasa S."/>
            <person name="Nakajima D."/>
            <person name="Nagase T."/>
            <person name="Ohara O."/>
            <person name="Koga H."/>
        </authorList>
    </citation>
    <scope>NUCLEOTIDE SEQUENCE [LARGE SCALE MRNA] (ISOFORMS 1; 2 AND 3)</scope>
    <source>
        <tissue>Brain</tissue>
    </source>
</reference>
<reference key="2">
    <citation type="journal article" date="2004" name="Genome Res.">
        <title>The status, quality, and expansion of the NIH full-length cDNA project: the Mammalian Gene Collection (MGC).</title>
        <authorList>
            <consortium name="The MGC Project Team"/>
        </authorList>
    </citation>
    <scope>NUCLEOTIDE SEQUENCE [LARGE SCALE MRNA] (ISOFORM 3)</scope>
    <source>
        <tissue>Eye</tissue>
    </source>
</reference>
<gene>
    <name type="primary">Rapgef5</name>
    <name type="synonym">Gfr</name>
    <name type="synonym">Kiaa0277</name>
    <name type="synonym">Mrgef</name>
</gene>
<keyword id="KW-0025">Alternative splicing</keyword>
<keyword id="KW-0344">Guanine-nucleotide releasing factor</keyword>
<keyword id="KW-0539">Nucleus</keyword>
<keyword id="KW-1185">Reference proteome</keyword>
<evidence type="ECO:0000250" key="1"/>
<evidence type="ECO:0000255" key="2">
    <source>
        <dbReference type="PROSITE-ProRule" id="PRU00066"/>
    </source>
</evidence>
<evidence type="ECO:0000255" key="3">
    <source>
        <dbReference type="PROSITE-ProRule" id="PRU00135"/>
    </source>
</evidence>
<evidence type="ECO:0000255" key="4">
    <source>
        <dbReference type="PROSITE-ProRule" id="PRU00168"/>
    </source>
</evidence>
<evidence type="ECO:0000303" key="5">
    <source>
    </source>
</evidence>
<evidence type="ECO:0000303" key="6">
    <source>
    </source>
</evidence>
<evidence type="ECO:0000305" key="7"/>
<protein>
    <recommendedName>
        <fullName>Rap guanine nucleotide exchange factor 5</fullName>
    </recommendedName>
    <alternativeName>
        <fullName>Guanine nucleotide exchange factor for Rap1</fullName>
    </alternativeName>
    <alternativeName>
        <fullName>M-Ras-regulated Rap GEF</fullName>
        <shortName>MR-GEF</shortName>
    </alternativeName>
</protein>
<accession>Q8C0Q9</accession>
<accession>Q8BJJ9</accession>
<accession>Q8C0R5</accession>
<proteinExistence type="evidence at transcript level"/>
<comment type="function">
    <text evidence="1">Guanine nucleotide exchange factor (GEF) for RAP1A, RAP2A and MRAS/M-Ras-GTP. Its association with MRAS inhibits Rap1 activation (By similarity).</text>
</comment>
<comment type="subcellular location">
    <subcellularLocation>
        <location evidence="1">Nucleus</location>
    </subcellularLocation>
</comment>
<comment type="alternative products">
    <event type="alternative splicing"/>
    <isoform>
        <id>Q8C0Q9-1</id>
        <name>1</name>
        <sequence type="displayed"/>
    </isoform>
    <isoform>
        <id>Q8C0Q9-2</id>
        <name>2</name>
        <sequence type="described" ref="VSP_007617 VSP_007618"/>
    </isoform>
    <isoform>
        <id>Q8C0Q9-3</id>
        <name>3</name>
        <sequence type="described" ref="VSP_007619 VSP_007620"/>
    </isoform>
</comment>
<comment type="sequence caution" evidence="7">
    <conflict type="erroneous initiation">
        <sequence resource="EMBL-CDS" id="BAC65516"/>
    </conflict>
</comment>
<feature type="chain" id="PRO_0000068874" description="Rap guanine nucleotide exchange factor 5">
    <location>
        <begin position="1"/>
        <end position="814"/>
    </location>
</feature>
<feature type="domain" description="DEP" evidence="2">
    <location>
        <begin position="43"/>
        <end position="118"/>
    </location>
</feature>
<feature type="domain" description="N-terminal Ras-GEF" evidence="3">
    <location>
        <begin position="301"/>
        <end position="434"/>
    </location>
</feature>
<feature type="domain" description="Ras-GEF" evidence="4">
    <location>
        <begin position="578"/>
        <end position="813"/>
    </location>
</feature>
<feature type="splice variant" id="VSP_007619" description="In isoform 3." evidence="5 6">
    <location>
        <begin position="1"/>
        <end position="234"/>
    </location>
</feature>
<feature type="splice variant" id="VSP_007617" description="In isoform 2." evidence="5">
    <location>
        <begin position="1"/>
        <end position="202"/>
    </location>
</feature>
<feature type="splice variant" id="VSP_007618" description="In isoform 2." evidence="5">
    <original>NADKHVTVTEANNGPDPQ</original>
    <variation>MSWDCGFKYLFAFSPTLK</variation>
    <location>
        <begin position="203"/>
        <end position="220"/>
    </location>
</feature>
<feature type="splice variant" id="VSP_007620" description="In isoform 3." evidence="5 6">
    <original>RIELVHKLARENCQFLQTEKKESEKLEQQDDEVTMVQVKEQGQSVLVLKKVASCGPAPTSGSAENDA</original>
    <variation>MGSSRLRVFDPPLERKDSAALSERQLPLPTFDVPYFKYIDEEDEDDEWSSRSQSSTEDDSVDSLLSD</variation>
    <location>
        <begin position="235"/>
        <end position="301"/>
    </location>
</feature>
<feature type="sequence conflict" description="In Ref. 1; BAC26736." evidence="7" ref="1">
    <original>R</original>
    <variation>W</variation>
    <location>
        <position position="410"/>
    </location>
</feature>
<feature type="sequence conflict" description="In Ref. 2; AAH46627." evidence="7" ref="2">
    <original>E</original>
    <variation>K</variation>
    <location>
        <position position="513"/>
    </location>
</feature>
<feature type="sequence conflict" description="In Ref. 1; BAC26723." evidence="7" ref="1">
    <original>R</original>
    <variation>L</variation>
    <location>
        <position position="646"/>
    </location>
</feature>
<name>RPGF5_MOUSE</name>
<sequence>MTTGDCQTLSRRISNPYLEHSPSQIYGENSSCAGRALRNIIILQAADLVKDRVNLKGFYRRSCVGSELVDWLLEHCPFVQCRSMAIGVWQLLLDMGIMSSVDQHLYFQDNYVFYQFSSDECSYLYCEFEREEEWQKGVKLLLELVHLIPARAGICDLSHQKTEDSEESSDEILARLTSAVQRELAAVIALKARKSAIEQDDENADKHVTVTEANNGPDPQAGVMCKLQERDDIGRIELVHKLARENCQFLQTEKKESEKLEQQDDEVTMVQVKEQGQSVLVLKKVASCGPAPTSGSAENDARYVVVSGTPEKILEHLLNDLHLAEVQHKETETLLDDFLLTYTVFMTTDDLCQALLRHYSAKKYQGEEENSDVPCRKRKVLHLVSQWISLYKDWLHEDEHSKMFLKTIYRNVLDDVYEYPILEKELKEFQKILGVYRRHTVDEYSPQKKNKALFHQFSLKENWLQHRGTVAETEEIFCHVYITEHSYISVKAKVSSTAQEILKVVAEKLQRAEEDLALVAITFSGEKHEFQPNDLAISKSLEASGRIYVYRKDLADTLNPLAENEESQQRSMRILGMNTWDLALELMSFDWSLFNSIHEQELIYFTFSRQGNGENTVNLSLLLQRCNEVQLWVATEILLCSQLGKRVQLVKKFIKIAAHCKAQQNLNSFFAIVMGLNTASVSRLSQTWEKIPGKFKKLFSELESLTDPSLNHKAYRDAFKKMKPPKIPFMPLLLKDVTFIHEGNKTFLDNLVNFEKLHMIADTVRTLRHCRTNQFGSDVSPKEQQELKSYVNHLYVIDSQQALFELSHRLEPRA</sequence>
<organism>
    <name type="scientific">Mus musculus</name>
    <name type="common">Mouse</name>
    <dbReference type="NCBI Taxonomy" id="10090"/>
    <lineage>
        <taxon>Eukaryota</taxon>
        <taxon>Metazoa</taxon>
        <taxon>Chordata</taxon>
        <taxon>Craniata</taxon>
        <taxon>Vertebrata</taxon>
        <taxon>Euteleostomi</taxon>
        <taxon>Mammalia</taxon>
        <taxon>Eutheria</taxon>
        <taxon>Euarchontoglires</taxon>
        <taxon>Glires</taxon>
        <taxon>Rodentia</taxon>
        <taxon>Myomorpha</taxon>
        <taxon>Muroidea</taxon>
        <taxon>Muridae</taxon>
        <taxon>Murinae</taxon>
        <taxon>Mus</taxon>
        <taxon>Mus</taxon>
    </lineage>
</organism>